<organism>
    <name type="scientific">Salinibacter ruber (strain DSM 13855 / M31)</name>
    <dbReference type="NCBI Taxonomy" id="309807"/>
    <lineage>
        <taxon>Bacteria</taxon>
        <taxon>Pseudomonadati</taxon>
        <taxon>Rhodothermota</taxon>
        <taxon>Rhodothermia</taxon>
        <taxon>Rhodothermales</taxon>
        <taxon>Salinibacteraceae</taxon>
        <taxon>Salinibacter</taxon>
    </lineage>
</organism>
<sequence>MPDVKTASHTVGTAEDRVDLKTMGRAGLKDFVAEHGAPRYRGDQLFNWVYGKGVSDFDRMSNLPKRMRRGLQRDATVEDIEIVEQQQAADRTVKALFELPSGREAETVLIPAIDERGEARRLTVCVSSEVGCAMGCEFCATGRMGFRENLTPGAIFDQVWHMNEVAQEHFGRPVTNIVFMGMGEPLLNYDAVLDSISILTDEDSLNLSAQKITVSTVGLARRIKDLADDQLRTNLAVSLHAPDNETRSRIMPVNEAEKTSLPALKEALQYYFDKTGRQITYEYCLFKGVNDSETDARNLADVTRWAPSKVNLLMYNPVEGLNFERTSEAQLDRFVQVLVQEGVTVTVRRSRGQDIDAACGQLANEGEDA</sequence>
<proteinExistence type="inferred from homology"/>
<name>RLMN_SALRD</name>
<keyword id="KW-0004">4Fe-4S</keyword>
<keyword id="KW-0963">Cytoplasm</keyword>
<keyword id="KW-1015">Disulfide bond</keyword>
<keyword id="KW-0408">Iron</keyword>
<keyword id="KW-0411">Iron-sulfur</keyword>
<keyword id="KW-0479">Metal-binding</keyword>
<keyword id="KW-0489">Methyltransferase</keyword>
<keyword id="KW-1185">Reference proteome</keyword>
<keyword id="KW-0698">rRNA processing</keyword>
<keyword id="KW-0949">S-adenosyl-L-methionine</keyword>
<keyword id="KW-0808">Transferase</keyword>
<keyword id="KW-0819">tRNA processing</keyword>
<reference key="1">
    <citation type="journal article" date="2005" name="Proc. Natl. Acad. Sci. U.S.A.">
        <title>The genome of Salinibacter ruber: convergence and gene exchange among hyperhalophilic bacteria and archaea.</title>
        <authorList>
            <person name="Mongodin E.F."/>
            <person name="Nelson K.E."/>
            <person name="Daugherty S."/>
            <person name="DeBoy R.T."/>
            <person name="Wister J."/>
            <person name="Khouri H."/>
            <person name="Weidman J."/>
            <person name="Walsh D.A."/>
            <person name="Papke R.T."/>
            <person name="Sanchez Perez G."/>
            <person name="Sharma A.K."/>
            <person name="Nesbo C.L."/>
            <person name="MacLeod D."/>
            <person name="Bapteste E."/>
            <person name="Doolittle W.F."/>
            <person name="Charlebois R.L."/>
            <person name="Legault B."/>
            <person name="Rodriguez-Valera F."/>
        </authorList>
    </citation>
    <scope>NUCLEOTIDE SEQUENCE [LARGE SCALE GENOMIC DNA]</scope>
    <source>
        <strain>DSM 13855 / CECT 5946 / M31</strain>
    </source>
</reference>
<feature type="chain" id="PRO_0000350382" description="Probable dual-specificity RNA methyltransferase RlmN">
    <location>
        <begin position="1"/>
        <end position="369"/>
    </location>
</feature>
<feature type="domain" description="Radical SAM core" evidence="2">
    <location>
        <begin position="118"/>
        <end position="354"/>
    </location>
</feature>
<feature type="active site" description="Proton acceptor" evidence="1">
    <location>
        <position position="106"/>
    </location>
</feature>
<feature type="active site" description="S-methylcysteine intermediate" evidence="1">
    <location>
        <position position="359"/>
    </location>
</feature>
<feature type="binding site" evidence="1">
    <location>
        <position position="132"/>
    </location>
    <ligand>
        <name>[4Fe-4S] cluster</name>
        <dbReference type="ChEBI" id="CHEBI:49883"/>
        <note>4Fe-4S-S-AdoMet</note>
    </ligand>
</feature>
<feature type="binding site" evidence="1">
    <location>
        <position position="136"/>
    </location>
    <ligand>
        <name>[4Fe-4S] cluster</name>
        <dbReference type="ChEBI" id="CHEBI:49883"/>
        <note>4Fe-4S-S-AdoMet</note>
    </ligand>
</feature>
<feature type="binding site" evidence="1">
    <location>
        <position position="139"/>
    </location>
    <ligand>
        <name>[4Fe-4S] cluster</name>
        <dbReference type="ChEBI" id="CHEBI:49883"/>
        <note>4Fe-4S-S-AdoMet</note>
    </ligand>
</feature>
<feature type="binding site" evidence="1">
    <location>
        <begin position="183"/>
        <end position="184"/>
    </location>
    <ligand>
        <name>S-adenosyl-L-methionine</name>
        <dbReference type="ChEBI" id="CHEBI:59789"/>
    </ligand>
</feature>
<feature type="binding site" evidence="1">
    <location>
        <position position="215"/>
    </location>
    <ligand>
        <name>S-adenosyl-L-methionine</name>
        <dbReference type="ChEBI" id="CHEBI:59789"/>
    </ligand>
</feature>
<feature type="binding site" evidence="1">
    <location>
        <begin position="238"/>
        <end position="240"/>
    </location>
    <ligand>
        <name>S-adenosyl-L-methionine</name>
        <dbReference type="ChEBI" id="CHEBI:59789"/>
    </ligand>
</feature>
<feature type="binding site" evidence="1">
    <location>
        <position position="316"/>
    </location>
    <ligand>
        <name>S-adenosyl-L-methionine</name>
        <dbReference type="ChEBI" id="CHEBI:59789"/>
    </ligand>
</feature>
<feature type="disulfide bond" description="(transient)" evidence="1">
    <location>
        <begin position="125"/>
        <end position="359"/>
    </location>
</feature>
<protein>
    <recommendedName>
        <fullName evidence="1">Probable dual-specificity RNA methyltransferase RlmN</fullName>
        <ecNumber evidence="1">2.1.1.192</ecNumber>
    </recommendedName>
    <alternativeName>
        <fullName evidence="1">23S rRNA (adenine(2503)-C(2))-methyltransferase</fullName>
    </alternativeName>
    <alternativeName>
        <fullName evidence="1">23S rRNA m2A2503 methyltransferase</fullName>
    </alternativeName>
    <alternativeName>
        <fullName evidence="1">Ribosomal RNA large subunit methyltransferase N</fullName>
    </alternativeName>
    <alternativeName>
        <fullName evidence="1">tRNA (adenine(37)-C(2))-methyltransferase</fullName>
    </alternativeName>
    <alternativeName>
        <fullName evidence="1">tRNA m2A37 methyltransferase</fullName>
    </alternativeName>
</protein>
<accession>Q2S0P9</accession>
<comment type="function">
    <text evidence="1">Specifically methylates position 2 of adenine 2503 in 23S rRNA and position 2 of adenine 37 in tRNAs.</text>
</comment>
<comment type="catalytic activity">
    <reaction evidence="1">
        <text>adenosine(2503) in 23S rRNA + 2 reduced [2Fe-2S]-[ferredoxin] + 2 S-adenosyl-L-methionine = 2-methyladenosine(2503) in 23S rRNA + 5'-deoxyadenosine + L-methionine + 2 oxidized [2Fe-2S]-[ferredoxin] + S-adenosyl-L-homocysteine</text>
        <dbReference type="Rhea" id="RHEA:42916"/>
        <dbReference type="Rhea" id="RHEA-COMP:10000"/>
        <dbReference type="Rhea" id="RHEA-COMP:10001"/>
        <dbReference type="Rhea" id="RHEA-COMP:10152"/>
        <dbReference type="Rhea" id="RHEA-COMP:10282"/>
        <dbReference type="ChEBI" id="CHEBI:17319"/>
        <dbReference type="ChEBI" id="CHEBI:33737"/>
        <dbReference type="ChEBI" id="CHEBI:33738"/>
        <dbReference type="ChEBI" id="CHEBI:57844"/>
        <dbReference type="ChEBI" id="CHEBI:57856"/>
        <dbReference type="ChEBI" id="CHEBI:59789"/>
        <dbReference type="ChEBI" id="CHEBI:74411"/>
        <dbReference type="ChEBI" id="CHEBI:74497"/>
        <dbReference type="EC" id="2.1.1.192"/>
    </reaction>
</comment>
<comment type="catalytic activity">
    <reaction evidence="1">
        <text>adenosine(37) in tRNA + 2 reduced [2Fe-2S]-[ferredoxin] + 2 S-adenosyl-L-methionine = 2-methyladenosine(37) in tRNA + 5'-deoxyadenosine + L-methionine + 2 oxidized [2Fe-2S]-[ferredoxin] + S-adenosyl-L-homocysteine</text>
        <dbReference type="Rhea" id="RHEA:43332"/>
        <dbReference type="Rhea" id="RHEA-COMP:10000"/>
        <dbReference type="Rhea" id="RHEA-COMP:10001"/>
        <dbReference type="Rhea" id="RHEA-COMP:10162"/>
        <dbReference type="Rhea" id="RHEA-COMP:10485"/>
        <dbReference type="ChEBI" id="CHEBI:17319"/>
        <dbReference type="ChEBI" id="CHEBI:33737"/>
        <dbReference type="ChEBI" id="CHEBI:33738"/>
        <dbReference type="ChEBI" id="CHEBI:57844"/>
        <dbReference type="ChEBI" id="CHEBI:57856"/>
        <dbReference type="ChEBI" id="CHEBI:59789"/>
        <dbReference type="ChEBI" id="CHEBI:74411"/>
        <dbReference type="ChEBI" id="CHEBI:74497"/>
        <dbReference type="EC" id="2.1.1.192"/>
    </reaction>
</comment>
<comment type="cofactor">
    <cofactor evidence="1">
        <name>[4Fe-4S] cluster</name>
        <dbReference type="ChEBI" id="CHEBI:49883"/>
    </cofactor>
    <text evidence="1">Binds 1 [4Fe-4S] cluster. The cluster is coordinated with 3 cysteines and an exchangeable S-adenosyl-L-methionine.</text>
</comment>
<comment type="subcellular location">
    <subcellularLocation>
        <location evidence="1">Cytoplasm</location>
    </subcellularLocation>
</comment>
<comment type="miscellaneous">
    <text evidence="1">Reaction proceeds by a ping-pong mechanism involving intermediate methylation of a conserved cysteine residue.</text>
</comment>
<comment type="similarity">
    <text evidence="1">Belongs to the radical SAM superfamily. RlmN family.</text>
</comment>
<evidence type="ECO:0000255" key="1">
    <source>
        <dbReference type="HAMAP-Rule" id="MF_01849"/>
    </source>
</evidence>
<evidence type="ECO:0000255" key="2">
    <source>
        <dbReference type="PROSITE-ProRule" id="PRU01266"/>
    </source>
</evidence>
<dbReference type="EC" id="2.1.1.192" evidence="1"/>
<dbReference type="EMBL" id="CP000159">
    <property type="protein sequence ID" value="ABC46250.1"/>
    <property type="molecule type" value="Genomic_DNA"/>
</dbReference>
<dbReference type="RefSeq" id="WP_011404854.1">
    <property type="nucleotide sequence ID" value="NC_007677.1"/>
</dbReference>
<dbReference type="RefSeq" id="YP_446232.1">
    <property type="nucleotide sequence ID" value="NC_007677.1"/>
</dbReference>
<dbReference type="SMR" id="Q2S0P9"/>
<dbReference type="STRING" id="309807.SRU_2126"/>
<dbReference type="EnsemblBacteria" id="ABC46250">
    <property type="protein sequence ID" value="ABC46250"/>
    <property type="gene ID" value="SRU_2126"/>
</dbReference>
<dbReference type="KEGG" id="sru:SRU_2126"/>
<dbReference type="PATRIC" id="fig|309807.25.peg.2214"/>
<dbReference type="eggNOG" id="COG0820">
    <property type="taxonomic scope" value="Bacteria"/>
</dbReference>
<dbReference type="HOGENOM" id="CLU_029101_0_0_10"/>
<dbReference type="OrthoDB" id="9793973at2"/>
<dbReference type="Proteomes" id="UP000008674">
    <property type="component" value="Chromosome"/>
</dbReference>
<dbReference type="GO" id="GO:0005737">
    <property type="term" value="C:cytoplasm"/>
    <property type="evidence" value="ECO:0007669"/>
    <property type="project" value="UniProtKB-SubCell"/>
</dbReference>
<dbReference type="GO" id="GO:0051539">
    <property type="term" value="F:4 iron, 4 sulfur cluster binding"/>
    <property type="evidence" value="ECO:0007669"/>
    <property type="project" value="UniProtKB-UniRule"/>
</dbReference>
<dbReference type="GO" id="GO:0046872">
    <property type="term" value="F:metal ion binding"/>
    <property type="evidence" value="ECO:0007669"/>
    <property type="project" value="UniProtKB-KW"/>
</dbReference>
<dbReference type="GO" id="GO:0070040">
    <property type="term" value="F:rRNA (adenine(2503)-C2-)-methyltransferase activity"/>
    <property type="evidence" value="ECO:0007669"/>
    <property type="project" value="UniProtKB-UniRule"/>
</dbReference>
<dbReference type="GO" id="GO:0019843">
    <property type="term" value="F:rRNA binding"/>
    <property type="evidence" value="ECO:0007669"/>
    <property type="project" value="UniProtKB-UniRule"/>
</dbReference>
<dbReference type="GO" id="GO:0002935">
    <property type="term" value="F:tRNA (adenine(37)-C2)-methyltransferase activity"/>
    <property type="evidence" value="ECO:0007669"/>
    <property type="project" value="UniProtKB-UniRule"/>
</dbReference>
<dbReference type="GO" id="GO:0000049">
    <property type="term" value="F:tRNA binding"/>
    <property type="evidence" value="ECO:0007669"/>
    <property type="project" value="UniProtKB-UniRule"/>
</dbReference>
<dbReference type="GO" id="GO:0070475">
    <property type="term" value="P:rRNA base methylation"/>
    <property type="evidence" value="ECO:0007669"/>
    <property type="project" value="UniProtKB-UniRule"/>
</dbReference>
<dbReference type="GO" id="GO:0030488">
    <property type="term" value="P:tRNA methylation"/>
    <property type="evidence" value="ECO:0007669"/>
    <property type="project" value="UniProtKB-UniRule"/>
</dbReference>
<dbReference type="CDD" id="cd01335">
    <property type="entry name" value="Radical_SAM"/>
    <property type="match status" value="1"/>
</dbReference>
<dbReference type="FunFam" id="3.20.20.70:FF:000014">
    <property type="entry name" value="Probable dual-specificity RNA methyltransferase RlmN"/>
    <property type="match status" value="1"/>
</dbReference>
<dbReference type="Gene3D" id="1.10.150.530">
    <property type="match status" value="1"/>
</dbReference>
<dbReference type="Gene3D" id="3.20.20.70">
    <property type="entry name" value="Aldolase class I"/>
    <property type="match status" value="1"/>
</dbReference>
<dbReference type="HAMAP" id="MF_01849">
    <property type="entry name" value="RNA_methyltr_RlmN"/>
    <property type="match status" value="1"/>
</dbReference>
<dbReference type="InterPro" id="IPR013785">
    <property type="entry name" value="Aldolase_TIM"/>
</dbReference>
<dbReference type="InterPro" id="IPR040072">
    <property type="entry name" value="Methyltransferase_A"/>
</dbReference>
<dbReference type="InterPro" id="IPR048641">
    <property type="entry name" value="RlmN_N"/>
</dbReference>
<dbReference type="InterPro" id="IPR027492">
    <property type="entry name" value="RNA_MTrfase_RlmN"/>
</dbReference>
<dbReference type="InterPro" id="IPR004383">
    <property type="entry name" value="rRNA_lsu_MTrfase_RlmN/Cfr"/>
</dbReference>
<dbReference type="InterPro" id="IPR007197">
    <property type="entry name" value="rSAM"/>
</dbReference>
<dbReference type="NCBIfam" id="TIGR00048">
    <property type="entry name" value="rRNA_mod_RlmN"/>
    <property type="match status" value="1"/>
</dbReference>
<dbReference type="PANTHER" id="PTHR30544">
    <property type="entry name" value="23S RRNA METHYLTRANSFERASE"/>
    <property type="match status" value="1"/>
</dbReference>
<dbReference type="PANTHER" id="PTHR30544:SF5">
    <property type="entry name" value="RADICAL SAM CORE DOMAIN-CONTAINING PROTEIN"/>
    <property type="match status" value="1"/>
</dbReference>
<dbReference type="Pfam" id="PF04055">
    <property type="entry name" value="Radical_SAM"/>
    <property type="match status" value="1"/>
</dbReference>
<dbReference type="Pfam" id="PF21016">
    <property type="entry name" value="RlmN_N"/>
    <property type="match status" value="1"/>
</dbReference>
<dbReference type="PIRSF" id="PIRSF006004">
    <property type="entry name" value="CHP00048"/>
    <property type="match status" value="1"/>
</dbReference>
<dbReference type="SFLD" id="SFLDF00275">
    <property type="entry name" value="adenosine_C2_methyltransferase"/>
    <property type="match status" value="1"/>
</dbReference>
<dbReference type="SFLD" id="SFLDG01062">
    <property type="entry name" value="methyltransferase_(Class_A)"/>
    <property type="match status" value="1"/>
</dbReference>
<dbReference type="SUPFAM" id="SSF102114">
    <property type="entry name" value="Radical SAM enzymes"/>
    <property type="match status" value="1"/>
</dbReference>
<dbReference type="PROSITE" id="PS51918">
    <property type="entry name" value="RADICAL_SAM"/>
    <property type="match status" value="1"/>
</dbReference>
<gene>
    <name evidence="1" type="primary">rlmN</name>
    <name type="ordered locus">SRU_2126</name>
</gene>